<keyword id="KW-0929">Antimicrobial</keyword>
<keyword id="KW-1015">Disulfide bond</keyword>
<keyword id="KW-0295">Fungicide</keyword>
<keyword id="KW-0611">Plant defense</keyword>
<keyword id="KW-1185">Reference proteome</keyword>
<keyword id="KW-0964">Secreted</keyword>
<keyword id="KW-0732">Signal</keyword>
<name>DF122_ARATH</name>
<dbReference type="EMBL" id="AL138644">
    <property type="status" value="NOT_ANNOTATED_CDS"/>
    <property type="molecule type" value="Genomic_DNA"/>
</dbReference>
<dbReference type="EMBL" id="CP002686">
    <property type="protein sequence ID" value="AEE77801.1"/>
    <property type="molecule type" value="Genomic_DNA"/>
</dbReference>
<dbReference type="RefSeq" id="NP_001030802.1">
    <property type="nucleotide sequence ID" value="NM_001035725.2"/>
</dbReference>
<dbReference type="SMR" id="P82745"/>
<dbReference type="PaxDb" id="3702-AT3G43505.1"/>
<dbReference type="ProteomicsDB" id="224198"/>
<dbReference type="EnsemblPlants" id="AT3G43505.1">
    <property type="protein sequence ID" value="AT3G43505.1"/>
    <property type="gene ID" value="AT3G43505"/>
</dbReference>
<dbReference type="GeneID" id="3769570"/>
<dbReference type="Gramene" id="AT3G43505.1">
    <property type="protein sequence ID" value="AT3G43505.1"/>
    <property type="gene ID" value="AT3G43505"/>
</dbReference>
<dbReference type="KEGG" id="ath:AT3G43505"/>
<dbReference type="Araport" id="AT3G43505"/>
<dbReference type="TAIR" id="AT3G43505">
    <property type="gene designation" value="LCR30"/>
</dbReference>
<dbReference type="HOGENOM" id="CLU_182511_2_0_1"/>
<dbReference type="InParanoid" id="P82745"/>
<dbReference type="OrthoDB" id="1021391at2759"/>
<dbReference type="PhylomeDB" id="P82745"/>
<dbReference type="PRO" id="PR:P82745"/>
<dbReference type="Proteomes" id="UP000006548">
    <property type="component" value="Chromosome 3"/>
</dbReference>
<dbReference type="ExpressionAtlas" id="P82745">
    <property type="expression patterns" value="baseline and differential"/>
</dbReference>
<dbReference type="GO" id="GO:0005576">
    <property type="term" value="C:extracellular region"/>
    <property type="evidence" value="ECO:0007669"/>
    <property type="project" value="UniProtKB-SubCell"/>
</dbReference>
<dbReference type="GO" id="GO:0050832">
    <property type="term" value="P:defense response to fungus"/>
    <property type="evidence" value="ECO:0007669"/>
    <property type="project" value="UniProtKB-KW"/>
</dbReference>
<dbReference type="GO" id="GO:0031640">
    <property type="term" value="P:killing of cells of another organism"/>
    <property type="evidence" value="ECO:0007669"/>
    <property type="project" value="UniProtKB-KW"/>
</dbReference>
<dbReference type="InterPro" id="IPR010851">
    <property type="entry name" value="DEFL"/>
</dbReference>
<dbReference type="PANTHER" id="PTHR33830:SF10">
    <property type="entry name" value="DEFENSIN-LIKE PROTEIN 122-RELATED"/>
    <property type="match status" value="1"/>
</dbReference>
<dbReference type="PANTHER" id="PTHR33830">
    <property type="entry name" value="DEFENSIN-LIKE PROTEIN 184-RELATED"/>
    <property type="match status" value="1"/>
</dbReference>
<dbReference type="Pfam" id="PF07333">
    <property type="entry name" value="SLR1-BP"/>
    <property type="match status" value="1"/>
</dbReference>
<reference evidence="5" key="1">
    <citation type="journal article" date="2000" name="Nature">
        <title>Sequence and analysis of chromosome 3 of the plant Arabidopsis thaliana.</title>
        <authorList>
            <person name="Salanoubat M."/>
            <person name="Lemcke K."/>
            <person name="Rieger M."/>
            <person name="Ansorge W."/>
            <person name="Unseld M."/>
            <person name="Fartmann B."/>
            <person name="Valle G."/>
            <person name="Bloecker H."/>
            <person name="Perez-Alonso M."/>
            <person name="Obermaier B."/>
            <person name="Delseny M."/>
            <person name="Boutry M."/>
            <person name="Grivell L.A."/>
            <person name="Mache R."/>
            <person name="Puigdomenech P."/>
            <person name="De Simone V."/>
            <person name="Choisne N."/>
            <person name="Artiguenave F."/>
            <person name="Robert C."/>
            <person name="Brottier P."/>
            <person name="Wincker P."/>
            <person name="Cattolico L."/>
            <person name="Weissenbach J."/>
            <person name="Saurin W."/>
            <person name="Quetier F."/>
            <person name="Schaefer M."/>
            <person name="Mueller-Auer S."/>
            <person name="Gabel C."/>
            <person name="Fuchs M."/>
            <person name="Benes V."/>
            <person name="Wurmbach E."/>
            <person name="Drzonek H."/>
            <person name="Erfle H."/>
            <person name="Jordan N."/>
            <person name="Bangert S."/>
            <person name="Wiedelmann R."/>
            <person name="Kranz H."/>
            <person name="Voss H."/>
            <person name="Holland R."/>
            <person name="Brandt P."/>
            <person name="Nyakatura G."/>
            <person name="Vezzi A."/>
            <person name="D'Angelo M."/>
            <person name="Pallavicini A."/>
            <person name="Toppo S."/>
            <person name="Simionati B."/>
            <person name="Conrad A."/>
            <person name="Hornischer K."/>
            <person name="Kauer G."/>
            <person name="Loehnert T.-H."/>
            <person name="Nordsiek G."/>
            <person name="Reichelt J."/>
            <person name="Scharfe M."/>
            <person name="Schoen O."/>
            <person name="Bargues M."/>
            <person name="Terol J."/>
            <person name="Climent J."/>
            <person name="Navarro P."/>
            <person name="Collado C."/>
            <person name="Perez-Perez A."/>
            <person name="Ottenwaelder B."/>
            <person name="Duchemin D."/>
            <person name="Cooke R."/>
            <person name="Laudie M."/>
            <person name="Berger-Llauro C."/>
            <person name="Purnelle B."/>
            <person name="Masuy D."/>
            <person name="de Haan M."/>
            <person name="Maarse A.C."/>
            <person name="Alcaraz J.-P."/>
            <person name="Cottet A."/>
            <person name="Casacuberta E."/>
            <person name="Monfort A."/>
            <person name="Argiriou A."/>
            <person name="Flores M."/>
            <person name="Liguori R."/>
            <person name="Vitale D."/>
            <person name="Mannhaupt G."/>
            <person name="Haase D."/>
            <person name="Schoof H."/>
            <person name="Rudd S."/>
            <person name="Zaccaria P."/>
            <person name="Mewes H.-W."/>
            <person name="Mayer K.F.X."/>
            <person name="Kaul S."/>
            <person name="Town C.D."/>
            <person name="Koo H.L."/>
            <person name="Tallon L.J."/>
            <person name="Jenkins J."/>
            <person name="Rooney T."/>
            <person name="Rizzo M."/>
            <person name="Walts A."/>
            <person name="Utterback T."/>
            <person name="Fujii C.Y."/>
            <person name="Shea T.P."/>
            <person name="Creasy T.H."/>
            <person name="Haas B."/>
            <person name="Maiti R."/>
            <person name="Wu D."/>
            <person name="Peterson J."/>
            <person name="Van Aken S."/>
            <person name="Pai G."/>
            <person name="Militscher J."/>
            <person name="Sellers P."/>
            <person name="Gill J.E."/>
            <person name="Feldblyum T.V."/>
            <person name="Preuss D."/>
            <person name="Lin X."/>
            <person name="Nierman W.C."/>
            <person name="Salzberg S.L."/>
            <person name="White O."/>
            <person name="Venter J.C."/>
            <person name="Fraser C.M."/>
            <person name="Kaneko T."/>
            <person name="Nakamura Y."/>
            <person name="Sato S."/>
            <person name="Kato T."/>
            <person name="Asamizu E."/>
            <person name="Sasamoto S."/>
            <person name="Kimura T."/>
            <person name="Idesawa K."/>
            <person name="Kawashima K."/>
            <person name="Kishida Y."/>
            <person name="Kiyokawa C."/>
            <person name="Kohara M."/>
            <person name="Matsumoto M."/>
            <person name="Matsuno A."/>
            <person name="Muraki A."/>
            <person name="Nakayama S."/>
            <person name="Nakazaki N."/>
            <person name="Shinpo S."/>
            <person name="Takeuchi C."/>
            <person name="Wada T."/>
            <person name="Watanabe A."/>
            <person name="Yamada M."/>
            <person name="Yasuda M."/>
            <person name="Tabata S."/>
        </authorList>
    </citation>
    <scope>NUCLEOTIDE SEQUENCE [LARGE SCALE GENOMIC DNA]</scope>
    <source>
        <strain evidence="3">cv. Columbia</strain>
    </source>
</reference>
<reference key="2">
    <citation type="journal article" date="2017" name="Plant J.">
        <title>Araport11: a complete reannotation of the Arabidopsis thaliana reference genome.</title>
        <authorList>
            <person name="Cheng C.Y."/>
            <person name="Krishnakumar V."/>
            <person name="Chan A.P."/>
            <person name="Thibaud-Nissen F."/>
            <person name="Schobel S."/>
            <person name="Town C.D."/>
        </authorList>
    </citation>
    <scope>GENOME REANNOTATION</scope>
    <source>
        <strain>cv. Columbia</strain>
    </source>
</reference>
<reference evidence="5" key="3">
    <citation type="journal article" date="2001" name="Plant Mol. Biol.">
        <title>Two large Arabidopsis thaliana gene families are homologous to the Brassica gene superfamily that encodes pollen coat proteins and the male component of the self-incompatibility response.</title>
        <authorList>
            <person name="Vanoosthuyse V."/>
            <person name="Miege C."/>
            <person name="Dumas C."/>
            <person name="Cock J.M."/>
        </authorList>
    </citation>
    <scope>IDENTIFICATION</scope>
    <scope>TISSUE SPECIFICITY</scope>
</reference>
<reference key="4">
    <citation type="journal article" date="2005" name="Plant Physiol.">
        <title>Genome organization of more than 300 defensin-like genes in Arabidopsis.</title>
        <authorList>
            <person name="Silverstein K.A.T."/>
            <person name="Graham M.A."/>
            <person name="Paape T.D."/>
            <person name="VandenBosch K.A."/>
        </authorList>
    </citation>
    <scope>GENE FAMILY</scope>
</reference>
<accession>P82745</accession>
<comment type="subcellular location">
    <subcellularLocation>
        <location evidence="1">Secreted</location>
    </subcellularLocation>
</comment>
<comment type="tissue specificity">
    <text evidence="4">Expressed in flower buds, but not in stems, roots or rosette leaves.</text>
</comment>
<comment type="similarity">
    <text evidence="5">Belongs to the DEFL family.</text>
</comment>
<organism evidence="5">
    <name type="scientific">Arabidopsis thaliana</name>
    <name type="common">Mouse-ear cress</name>
    <dbReference type="NCBI Taxonomy" id="3702"/>
    <lineage>
        <taxon>Eukaryota</taxon>
        <taxon>Viridiplantae</taxon>
        <taxon>Streptophyta</taxon>
        <taxon>Embryophyta</taxon>
        <taxon>Tracheophyta</taxon>
        <taxon>Spermatophyta</taxon>
        <taxon>Magnoliopsida</taxon>
        <taxon>eudicotyledons</taxon>
        <taxon>Gunneridae</taxon>
        <taxon>Pentapetalae</taxon>
        <taxon>rosids</taxon>
        <taxon>malvids</taxon>
        <taxon>Brassicales</taxon>
        <taxon>Brassicaceae</taxon>
        <taxon>Camelineae</taxon>
        <taxon>Arabidopsis</taxon>
    </lineage>
</organism>
<evidence type="ECO:0000250" key="1"/>
<evidence type="ECO:0000255" key="2"/>
<evidence type="ECO:0000269" key="3">
    <source>
    </source>
</evidence>
<evidence type="ECO:0000269" key="4">
    <source>
    </source>
</evidence>
<evidence type="ECO:0000305" key="5"/>
<feature type="signal peptide" evidence="2">
    <location>
        <begin position="1"/>
        <end position="25"/>
    </location>
</feature>
<feature type="chain" id="PRO_0000017269" description="Defensin-like protein 122">
    <location>
        <begin position="26"/>
        <end position="76"/>
    </location>
</feature>
<feature type="disulfide bond" evidence="1">
    <location>
        <begin position="29"/>
        <end position="74"/>
    </location>
</feature>
<feature type="disulfide bond" evidence="1">
    <location>
        <begin position="39"/>
        <end position="60"/>
    </location>
</feature>
<feature type="disulfide bond" evidence="1">
    <location>
        <begin position="44"/>
        <end position="68"/>
    </location>
</feature>
<feature type="disulfide bond" evidence="1">
    <location>
        <begin position="48"/>
        <end position="70"/>
    </location>
</feature>
<gene>
    <name type="primary">LCR30</name>
    <name type="ordered locus">At3g43505</name>
    <name type="ORF">T18D12</name>
</gene>
<proteinExistence type="evidence at transcript level"/>
<sequence length="76" mass="8296">MSKTTVIAIFMVVLVLGLVTKETQGQELCHDYMSGTELCEEDKCVAKCIWMHGTAAKGTCMPKPSKQCVCTYSCNA</sequence>
<protein>
    <recommendedName>
        <fullName>Defensin-like protein 122</fullName>
    </recommendedName>
    <alternativeName>
        <fullName>Low-molecular-weight cysteine-rich protein 30</fullName>
        <shortName>Protein LCR30</shortName>
    </alternativeName>
</protein>